<evidence type="ECO:0000255" key="1">
    <source>
        <dbReference type="HAMAP-Rule" id="MF_01342"/>
    </source>
</evidence>
<evidence type="ECO:0000305" key="2"/>
<dbReference type="EMBL" id="AM286690">
    <property type="protein sequence ID" value="CAL15852.1"/>
    <property type="molecule type" value="Genomic_DNA"/>
</dbReference>
<dbReference type="RefSeq" id="WP_007150407.1">
    <property type="nucleotide sequence ID" value="NC_008260.1"/>
</dbReference>
<dbReference type="SMR" id="Q0VSJ6"/>
<dbReference type="STRING" id="393595.ABO_0404"/>
<dbReference type="KEGG" id="abo:ABO_0404"/>
<dbReference type="eggNOG" id="COG0197">
    <property type="taxonomic scope" value="Bacteria"/>
</dbReference>
<dbReference type="HOGENOM" id="CLU_078858_2_1_6"/>
<dbReference type="OrthoDB" id="9802589at2"/>
<dbReference type="Proteomes" id="UP000008871">
    <property type="component" value="Chromosome"/>
</dbReference>
<dbReference type="GO" id="GO:0022625">
    <property type="term" value="C:cytosolic large ribosomal subunit"/>
    <property type="evidence" value="ECO:0007669"/>
    <property type="project" value="TreeGrafter"/>
</dbReference>
<dbReference type="GO" id="GO:0019843">
    <property type="term" value="F:rRNA binding"/>
    <property type="evidence" value="ECO:0007669"/>
    <property type="project" value="UniProtKB-UniRule"/>
</dbReference>
<dbReference type="GO" id="GO:0003735">
    <property type="term" value="F:structural constituent of ribosome"/>
    <property type="evidence" value="ECO:0007669"/>
    <property type="project" value="InterPro"/>
</dbReference>
<dbReference type="GO" id="GO:0000049">
    <property type="term" value="F:tRNA binding"/>
    <property type="evidence" value="ECO:0007669"/>
    <property type="project" value="UniProtKB-KW"/>
</dbReference>
<dbReference type="GO" id="GO:0006412">
    <property type="term" value="P:translation"/>
    <property type="evidence" value="ECO:0007669"/>
    <property type="project" value="UniProtKB-UniRule"/>
</dbReference>
<dbReference type="CDD" id="cd01433">
    <property type="entry name" value="Ribosomal_L16_L10e"/>
    <property type="match status" value="1"/>
</dbReference>
<dbReference type="FunFam" id="3.90.1170.10:FF:000001">
    <property type="entry name" value="50S ribosomal protein L16"/>
    <property type="match status" value="1"/>
</dbReference>
<dbReference type="Gene3D" id="3.90.1170.10">
    <property type="entry name" value="Ribosomal protein L10e/L16"/>
    <property type="match status" value="1"/>
</dbReference>
<dbReference type="HAMAP" id="MF_01342">
    <property type="entry name" value="Ribosomal_uL16"/>
    <property type="match status" value="1"/>
</dbReference>
<dbReference type="InterPro" id="IPR047873">
    <property type="entry name" value="Ribosomal_uL16"/>
</dbReference>
<dbReference type="InterPro" id="IPR000114">
    <property type="entry name" value="Ribosomal_uL16_bact-type"/>
</dbReference>
<dbReference type="InterPro" id="IPR020798">
    <property type="entry name" value="Ribosomal_uL16_CS"/>
</dbReference>
<dbReference type="InterPro" id="IPR016180">
    <property type="entry name" value="Ribosomal_uL16_dom"/>
</dbReference>
<dbReference type="InterPro" id="IPR036920">
    <property type="entry name" value="Ribosomal_uL16_sf"/>
</dbReference>
<dbReference type="NCBIfam" id="TIGR01164">
    <property type="entry name" value="rplP_bact"/>
    <property type="match status" value="1"/>
</dbReference>
<dbReference type="PANTHER" id="PTHR12220">
    <property type="entry name" value="50S/60S RIBOSOMAL PROTEIN L16"/>
    <property type="match status" value="1"/>
</dbReference>
<dbReference type="PANTHER" id="PTHR12220:SF13">
    <property type="entry name" value="LARGE RIBOSOMAL SUBUNIT PROTEIN UL16M"/>
    <property type="match status" value="1"/>
</dbReference>
<dbReference type="Pfam" id="PF00252">
    <property type="entry name" value="Ribosomal_L16"/>
    <property type="match status" value="1"/>
</dbReference>
<dbReference type="PRINTS" id="PR00060">
    <property type="entry name" value="RIBOSOMALL16"/>
</dbReference>
<dbReference type="SUPFAM" id="SSF54686">
    <property type="entry name" value="Ribosomal protein L16p/L10e"/>
    <property type="match status" value="1"/>
</dbReference>
<dbReference type="PROSITE" id="PS00586">
    <property type="entry name" value="RIBOSOMAL_L16_1"/>
    <property type="match status" value="1"/>
</dbReference>
<dbReference type="PROSITE" id="PS00701">
    <property type="entry name" value="RIBOSOMAL_L16_2"/>
    <property type="match status" value="1"/>
</dbReference>
<gene>
    <name evidence="1" type="primary">rplP</name>
    <name type="ordered locus">ABO_0404</name>
</gene>
<organism>
    <name type="scientific">Alcanivorax borkumensis (strain ATCC 700651 / DSM 11573 / NCIMB 13689 / SK2)</name>
    <dbReference type="NCBI Taxonomy" id="393595"/>
    <lineage>
        <taxon>Bacteria</taxon>
        <taxon>Pseudomonadati</taxon>
        <taxon>Pseudomonadota</taxon>
        <taxon>Gammaproteobacteria</taxon>
        <taxon>Oceanospirillales</taxon>
        <taxon>Alcanivoracaceae</taxon>
        <taxon>Alcanivorax</taxon>
    </lineage>
</organism>
<protein>
    <recommendedName>
        <fullName evidence="1">Large ribosomal subunit protein uL16</fullName>
    </recommendedName>
    <alternativeName>
        <fullName evidence="2">50S ribosomal protein L16</fullName>
    </alternativeName>
</protein>
<name>RL16_ALCBS</name>
<comment type="function">
    <text evidence="1">Binds 23S rRNA and is also seen to make contacts with the A and possibly P site tRNAs.</text>
</comment>
<comment type="subunit">
    <text evidence="1">Part of the 50S ribosomal subunit.</text>
</comment>
<comment type="similarity">
    <text evidence="1">Belongs to the universal ribosomal protein uL16 family.</text>
</comment>
<keyword id="KW-1185">Reference proteome</keyword>
<keyword id="KW-0687">Ribonucleoprotein</keyword>
<keyword id="KW-0689">Ribosomal protein</keyword>
<keyword id="KW-0694">RNA-binding</keyword>
<keyword id="KW-0699">rRNA-binding</keyword>
<keyword id="KW-0820">tRNA-binding</keyword>
<feature type="chain" id="PRO_0000251613" description="Large ribosomal subunit protein uL16">
    <location>
        <begin position="1"/>
        <end position="137"/>
    </location>
</feature>
<accession>Q0VSJ6</accession>
<reference key="1">
    <citation type="journal article" date="2006" name="Nat. Biotechnol.">
        <title>Genome sequence of the ubiquitous hydrocarbon-degrading marine bacterium Alcanivorax borkumensis.</title>
        <authorList>
            <person name="Schneiker S."/>
            <person name="Martins dos Santos V.A.P."/>
            <person name="Bartels D."/>
            <person name="Bekel T."/>
            <person name="Brecht M."/>
            <person name="Buhrmester J."/>
            <person name="Chernikova T.N."/>
            <person name="Denaro R."/>
            <person name="Ferrer M."/>
            <person name="Gertler C."/>
            <person name="Goesmann A."/>
            <person name="Golyshina O.V."/>
            <person name="Kaminski F."/>
            <person name="Khachane A.N."/>
            <person name="Lang S."/>
            <person name="Linke B."/>
            <person name="McHardy A.C."/>
            <person name="Meyer F."/>
            <person name="Nechitaylo T."/>
            <person name="Puehler A."/>
            <person name="Regenhardt D."/>
            <person name="Rupp O."/>
            <person name="Sabirova J.S."/>
            <person name="Selbitschka W."/>
            <person name="Yakimov M.M."/>
            <person name="Timmis K.N."/>
            <person name="Vorhoelter F.-J."/>
            <person name="Weidner S."/>
            <person name="Kaiser O."/>
            <person name="Golyshin P.N."/>
        </authorList>
    </citation>
    <scope>NUCLEOTIDE SEQUENCE [LARGE SCALE GENOMIC DNA]</scope>
    <source>
        <strain>ATCC 700651 / DSM 11573 / NCIMB 13689 / SK2</strain>
    </source>
</reference>
<proteinExistence type="inferred from homology"/>
<sequence>MLQPKRTKFRKVMKGRNRGLAQRGSKVSFGTIGLQATGRGRITARQIEAARRAMTRHIKRGGKIWIRVFPDKPITNKPLEVRMGKGKGSVEYWVAQIQPGKMLYEMEGVSEDVAREAFRLAAAKLPVSTRVVTRTVM</sequence>